<accession>Q7NE68</accession>
<sequence>MDERLPERAHLVTEQVNPDSARLDRLDSPSLVELFCREDERVVPAVRAAAPAIARAIDLTAAALRGGGRLFYVGAGTSGRLGVLDASECPPTFCTDPEQVQGIIAGGTAALTRSVEGAEDDPEAGAAELAGRALSAADVVVGISAGGTAPYVSGALAYARSLGGVTIFVACVPTNQIPERWDIEIRVPVGPEVLAGSTRLKAGTATKLVLNILSTGAMVRLGKTYGNLMVDVAVSNQKLRDRAVRILTTLTELERTAALALLEASGLRVKVALLMHWSNQDPASCATALEAAGGLLPVALEKLSGR</sequence>
<gene>
    <name evidence="1" type="primary">murQ</name>
    <name type="ordered locus">glr4012</name>
</gene>
<dbReference type="EC" id="4.2.1.126" evidence="1"/>
<dbReference type="EMBL" id="BA000045">
    <property type="protein sequence ID" value="BAC91953.1"/>
    <property type="molecule type" value="Genomic_DNA"/>
</dbReference>
<dbReference type="RefSeq" id="NP_926958.1">
    <property type="nucleotide sequence ID" value="NC_005125.1"/>
</dbReference>
<dbReference type="RefSeq" id="WP_011144000.1">
    <property type="nucleotide sequence ID" value="NC_005125.1"/>
</dbReference>
<dbReference type="SMR" id="Q7NE68"/>
<dbReference type="STRING" id="251221.gene:10761530"/>
<dbReference type="EnsemblBacteria" id="BAC91953">
    <property type="protein sequence ID" value="BAC91953"/>
    <property type="gene ID" value="BAC91953"/>
</dbReference>
<dbReference type="KEGG" id="gvi:glr4012"/>
<dbReference type="PATRIC" id="fig|251221.4.peg.4044"/>
<dbReference type="eggNOG" id="COG2103">
    <property type="taxonomic scope" value="Bacteria"/>
</dbReference>
<dbReference type="HOGENOM" id="CLU_049049_1_1_3"/>
<dbReference type="InParanoid" id="Q7NE68"/>
<dbReference type="OrthoDB" id="9813395at2"/>
<dbReference type="PhylomeDB" id="Q7NE68"/>
<dbReference type="UniPathway" id="UPA00342"/>
<dbReference type="Proteomes" id="UP000000557">
    <property type="component" value="Chromosome"/>
</dbReference>
<dbReference type="GO" id="GO:0097367">
    <property type="term" value="F:carbohydrate derivative binding"/>
    <property type="evidence" value="ECO:0007669"/>
    <property type="project" value="InterPro"/>
</dbReference>
<dbReference type="GO" id="GO:0016835">
    <property type="term" value="F:carbon-oxygen lyase activity"/>
    <property type="evidence" value="ECO:0000318"/>
    <property type="project" value="GO_Central"/>
</dbReference>
<dbReference type="GO" id="GO:0016803">
    <property type="term" value="F:ether hydrolase activity"/>
    <property type="evidence" value="ECO:0000318"/>
    <property type="project" value="GO_Central"/>
</dbReference>
<dbReference type="GO" id="GO:0046348">
    <property type="term" value="P:amino sugar catabolic process"/>
    <property type="evidence" value="ECO:0000318"/>
    <property type="project" value="GO_Central"/>
</dbReference>
<dbReference type="GO" id="GO:0097173">
    <property type="term" value="P:N-acetylmuramic acid catabolic process"/>
    <property type="evidence" value="ECO:0007669"/>
    <property type="project" value="UniProtKB-UniPathway"/>
</dbReference>
<dbReference type="GO" id="GO:0009254">
    <property type="term" value="P:peptidoglycan turnover"/>
    <property type="evidence" value="ECO:0000318"/>
    <property type="project" value="GO_Central"/>
</dbReference>
<dbReference type="CDD" id="cd05007">
    <property type="entry name" value="SIS_Etherase"/>
    <property type="match status" value="1"/>
</dbReference>
<dbReference type="FunFam" id="3.40.50.10490:FF:000014">
    <property type="entry name" value="N-acetylmuramic acid 6-phosphate etherase"/>
    <property type="match status" value="1"/>
</dbReference>
<dbReference type="Gene3D" id="1.10.8.1080">
    <property type="match status" value="1"/>
</dbReference>
<dbReference type="Gene3D" id="3.40.50.10490">
    <property type="entry name" value="Glucose-6-phosphate isomerase like protein, domain 1"/>
    <property type="match status" value="1"/>
</dbReference>
<dbReference type="HAMAP" id="MF_00068">
    <property type="entry name" value="MurQ"/>
    <property type="match status" value="1"/>
</dbReference>
<dbReference type="InterPro" id="IPR005488">
    <property type="entry name" value="Etherase_MurQ"/>
</dbReference>
<dbReference type="InterPro" id="IPR005486">
    <property type="entry name" value="Glucokinase_regulatory_CS"/>
</dbReference>
<dbReference type="InterPro" id="IPR040190">
    <property type="entry name" value="MURQ/GCKR"/>
</dbReference>
<dbReference type="InterPro" id="IPR001347">
    <property type="entry name" value="SIS_dom"/>
</dbReference>
<dbReference type="InterPro" id="IPR046348">
    <property type="entry name" value="SIS_dom_sf"/>
</dbReference>
<dbReference type="NCBIfam" id="TIGR00274">
    <property type="entry name" value="N-acetylmuramic acid 6-phosphate etherase"/>
    <property type="match status" value="1"/>
</dbReference>
<dbReference type="NCBIfam" id="NF003915">
    <property type="entry name" value="PRK05441.1"/>
    <property type="match status" value="1"/>
</dbReference>
<dbReference type="NCBIfam" id="NF009222">
    <property type="entry name" value="PRK12570.1"/>
    <property type="match status" value="1"/>
</dbReference>
<dbReference type="PANTHER" id="PTHR10088">
    <property type="entry name" value="GLUCOKINASE REGULATORY PROTEIN"/>
    <property type="match status" value="1"/>
</dbReference>
<dbReference type="PANTHER" id="PTHR10088:SF4">
    <property type="entry name" value="GLUCOKINASE REGULATORY PROTEIN"/>
    <property type="match status" value="1"/>
</dbReference>
<dbReference type="Pfam" id="PF22645">
    <property type="entry name" value="GKRP_SIS_N"/>
    <property type="match status" value="1"/>
</dbReference>
<dbReference type="SUPFAM" id="SSF53697">
    <property type="entry name" value="SIS domain"/>
    <property type="match status" value="1"/>
</dbReference>
<dbReference type="PROSITE" id="PS01272">
    <property type="entry name" value="GCKR"/>
    <property type="match status" value="1"/>
</dbReference>
<dbReference type="PROSITE" id="PS51464">
    <property type="entry name" value="SIS"/>
    <property type="match status" value="1"/>
</dbReference>
<comment type="function">
    <text evidence="1">Specifically catalyzes the cleavage of the D-lactyl ether substituent of MurNAc 6-phosphate, producing GlcNAc 6-phosphate and D-lactate.</text>
</comment>
<comment type="catalytic activity">
    <reaction evidence="1">
        <text>N-acetyl-D-muramate 6-phosphate + H2O = N-acetyl-D-glucosamine 6-phosphate + (R)-lactate</text>
        <dbReference type="Rhea" id="RHEA:26410"/>
        <dbReference type="ChEBI" id="CHEBI:15377"/>
        <dbReference type="ChEBI" id="CHEBI:16004"/>
        <dbReference type="ChEBI" id="CHEBI:57513"/>
        <dbReference type="ChEBI" id="CHEBI:58722"/>
        <dbReference type="EC" id="4.2.1.126"/>
    </reaction>
</comment>
<comment type="pathway">
    <text evidence="1">Amino-sugar metabolism; N-acetylmuramate degradation.</text>
</comment>
<comment type="subunit">
    <text evidence="1">Homodimer.</text>
</comment>
<comment type="miscellaneous">
    <text evidence="1">A lyase-type mechanism (elimination/hydration) is suggested for the cleavage of the lactyl ether bond of MurNAc 6-phosphate, with the formation of an alpha,beta-unsaturated aldehyde intermediate with (E)-stereochemistry, followed by the syn addition of water to give product.</text>
</comment>
<comment type="similarity">
    <text evidence="1">Belongs to the GCKR-like family. MurNAc-6-P etherase subfamily.</text>
</comment>
<reference key="1">
    <citation type="journal article" date="2003" name="DNA Res.">
        <title>Complete genome structure of Gloeobacter violaceus PCC 7421, a cyanobacterium that lacks thylakoids.</title>
        <authorList>
            <person name="Nakamura Y."/>
            <person name="Kaneko T."/>
            <person name="Sato S."/>
            <person name="Mimuro M."/>
            <person name="Miyashita H."/>
            <person name="Tsuchiya T."/>
            <person name="Sasamoto S."/>
            <person name="Watanabe A."/>
            <person name="Kawashima K."/>
            <person name="Kishida Y."/>
            <person name="Kiyokawa C."/>
            <person name="Kohara M."/>
            <person name="Matsumoto M."/>
            <person name="Matsuno A."/>
            <person name="Nakazaki N."/>
            <person name="Shimpo S."/>
            <person name="Takeuchi C."/>
            <person name="Yamada M."/>
            <person name="Tabata S."/>
        </authorList>
    </citation>
    <scope>NUCLEOTIDE SEQUENCE [LARGE SCALE GENOMIC DNA]</scope>
    <source>
        <strain>ATCC 29082 / PCC 7421</strain>
    </source>
</reference>
<feature type="chain" id="PRO_0000249627" description="N-acetylmuramic acid 6-phosphate etherase">
    <location>
        <begin position="1"/>
        <end position="306"/>
    </location>
</feature>
<feature type="domain" description="SIS" evidence="1">
    <location>
        <begin position="60"/>
        <end position="223"/>
    </location>
</feature>
<feature type="active site" description="Proton donor" evidence="1">
    <location>
        <position position="88"/>
    </location>
</feature>
<feature type="active site" evidence="1">
    <location>
        <position position="119"/>
    </location>
</feature>
<organism>
    <name type="scientific">Gloeobacter violaceus (strain ATCC 29082 / PCC 7421)</name>
    <dbReference type="NCBI Taxonomy" id="251221"/>
    <lineage>
        <taxon>Bacteria</taxon>
        <taxon>Bacillati</taxon>
        <taxon>Cyanobacteriota</taxon>
        <taxon>Cyanophyceae</taxon>
        <taxon>Gloeobacterales</taxon>
        <taxon>Gloeobacteraceae</taxon>
        <taxon>Gloeobacter</taxon>
    </lineage>
</organism>
<keyword id="KW-0119">Carbohydrate metabolism</keyword>
<keyword id="KW-0456">Lyase</keyword>
<keyword id="KW-1185">Reference proteome</keyword>
<name>MURQ_GLOVI</name>
<proteinExistence type="inferred from homology"/>
<protein>
    <recommendedName>
        <fullName evidence="1">N-acetylmuramic acid 6-phosphate etherase</fullName>
        <shortName evidence="1">MurNAc-6-P etherase</shortName>
        <ecNumber evidence="1">4.2.1.126</ecNumber>
    </recommendedName>
    <alternativeName>
        <fullName evidence="1">N-acetylmuramic acid 6-phosphate hydrolase</fullName>
    </alternativeName>
    <alternativeName>
        <fullName evidence="1">N-acetylmuramic acid 6-phosphate lyase</fullName>
    </alternativeName>
</protein>
<evidence type="ECO:0000255" key="1">
    <source>
        <dbReference type="HAMAP-Rule" id="MF_00068"/>
    </source>
</evidence>